<protein>
    <recommendedName>
        <fullName evidence="1">Large ribosomal subunit protein uL5</fullName>
    </recommendedName>
    <alternativeName>
        <fullName evidence="2">50S ribosomal protein L5</fullName>
    </alternativeName>
</protein>
<keyword id="KW-0687">Ribonucleoprotein</keyword>
<keyword id="KW-0689">Ribosomal protein</keyword>
<keyword id="KW-0694">RNA-binding</keyword>
<keyword id="KW-0699">rRNA-binding</keyword>
<keyword id="KW-0820">tRNA-binding</keyword>
<reference key="1">
    <citation type="journal article" date="2007" name="J. Bacteriol.">
        <title>Complete genome of acute rheumatic fever-associated serotype M5 Streptococcus pyogenes strain Manfredo.</title>
        <authorList>
            <person name="Holden M.T.G."/>
            <person name="Scott A."/>
            <person name="Cherevach I."/>
            <person name="Chillingworth T."/>
            <person name="Churcher C."/>
            <person name="Cronin A."/>
            <person name="Dowd L."/>
            <person name="Feltwell T."/>
            <person name="Hamlin N."/>
            <person name="Holroyd S."/>
            <person name="Jagels K."/>
            <person name="Moule S."/>
            <person name="Mungall K."/>
            <person name="Quail M.A."/>
            <person name="Price C."/>
            <person name="Rabbinowitsch E."/>
            <person name="Sharp S."/>
            <person name="Skelton J."/>
            <person name="Whitehead S."/>
            <person name="Barrell B.G."/>
            <person name="Kehoe M."/>
            <person name="Parkhill J."/>
        </authorList>
    </citation>
    <scope>NUCLEOTIDE SEQUENCE [LARGE SCALE GENOMIC DNA]</scope>
    <source>
        <strain>Manfredo</strain>
    </source>
</reference>
<proteinExistence type="inferred from homology"/>
<evidence type="ECO:0000255" key="1">
    <source>
        <dbReference type="HAMAP-Rule" id="MF_01333"/>
    </source>
</evidence>
<evidence type="ECO:0000305" key="2"/>
<comment type="function">
    <text evidence="1">This is one of the proteins that bind and probably mediate the attachment of the 5S RNA into the large ribosomal subunit, where it forms part of the central protuberance. In the 70S ribosome it contacts protein S13 of the 30S subunit (bridge B1b), connecting the 2 subunits; this bridge is implicated in subunit movement. Contacts the P site tRNA; the 5S rRNA and some of its associated proteins might help stabilize positioning of ribosome-bound tRNAs.</text>
</comment>
<comment type="subunit">
    <text evidence="1">Part of the 50S ribosomal subunit; part of the 5S rRNA/L5/L18/L25 subcomplex. Contacts the 5S rRNA and the P site tRNA. Forms a bridge to the 30S subunit in the 70S ribosome.</text>
</comment>
<comment type="similarity">
    <text evidence="1">Belongs to the universal ribosomal protein uL5 family.</text>
</comment>
<dbReference type="EMBL" id="AM295007">
    <property type="protein sequence ID" value="CAM29398.1"/>
    <property type="molecule type" value="Genomic_DNA"/>
</dbReference>
<dbReference type="RefSeq" id="WP_002986634.1">
    <property type="nucleotide sequence ID" value="NC_009332.1"/>
</dbReference>
<dbReference type="SMR" id="A2RC26"/>
<dbReference type="GeneID" id="69900038"/>
<dbReference type="KEGG" id="spf:SpyM50056"/>
<dbReference type="HOGENOM" id="CLU_061015_2_1_9"/>
<dbReference type="GO" id="GO:1990904">
    <property type="term" value="C:ribonucleoprotein complex"/>
    <property type="evidence" value="ECO:0007669"/>
    <property type="project" value="UniProtKB-KW"/>
</dbReference>
<dbReference type="GO" id="GO:0005840">
    <property type="term" value="C:ribosome"/>
    <property type="evidence" value="ECO:0007669"/>
    <property type="project" value="UniProtKB-KW"/>
</dbReference>
<dbReference type="GO" id="GO:0019843">
    <property type="term" value="F:rRNA binding"/>
    <property type="evidence" value="ECO:0007669"/>
    <property type="project" value="UniProtKB-UniRule"/>
</dbReference>
<dbReference type="GO" id="GO:0003735">
    <property type="term" value="F:structural constituent of ribosome"/>
    <property type="evidence" value="ECO:0007669"/>
    <property type="project" value="InterPro"/>
</dbReference>
<dbReference type="GO" id="GO:0000049">
    <property type="term" value="F:tRNA binding"/>
    <property type="evidence" value="ECO:0007669"/>
    <property type="project" value="UniProtKB-UniRule"/>
</dbReference>
<dbReference type="GO" id="GO:0006412">
    <property type="term" value="P:translation"/>
    <property type="evidence" value="ECO:0007669"/>
    <property type="project" value="UniProtKB-UniRule"/>
</dbReference>
<dbReference type="FunFam" id="3.30.1440.10:FF:000001">
    <property type="entry name" value="50S ribosomal protein L5"/>
    <property type="match status" value="1"/>
</dbReference>
<dbReference type="Gene3D" id="3.30.1440.10">
    <property type="match status" value="1"/>
</dbReference>
<dbReference type="HAMAP" id="MF_01333_B">
    <property type="entry name" value="Ribosomal_uL5_B"/>
    <property type="match status" value="1"/>
</dbReference>
<dbReference type="InterPro" id="IPR002132">
    <property type="entry name" value="Ribosomal_uL5"/>
</dbReference>
<dbReference type="InterPro" id="IPR020930">
    <property type="entry name" value="Ribosomal_uL5_bac-type"/>
</dbReference>
<dbReference type="InterPro" id="IPR031309">
    <property type="entry name" value="Ribosomal_uL5_C"/>
</dbReference>
<dbReference type="InterPro" id="IPR020929">
    <property type="entry name" value="Ribosomal_uL5_CS"/>
</dbReference>
<dbReference type="InterPro" id="IPR022803">
    <property type="entry name" value="Ribosomal_uL5_dom_sf"/>
</dbReference>
<dbReference type="InterPro" id="IPR031310">
    <property type="entry name" value="Ribosomal_uL5_N"/>
</dbReference>
<dbReference type="NCBIfam" id="NF000585">
    <property type="entry name" value="PRK00010.1"/>
    <property type="match status" value="1"/>
</dbReference>
<dbReference type="PANTHER" id="PTHR11994">
    <property type="entry name" value="60S RIBOSOMAL PROTEIN L11-RELATED"/>
    <property type="match status" value="1"/>
</dbReference>
<dbReference type="Pfam" id="PF00281">
    <property type="entry name" value="Ribosomal_L5"/>
    <property type="match status" value="1"/>
</dbReference>
<dbReference type="Pfam" id="PF00673">
    <property type="entry name" value="Ribosomal_L5_C"/>
    <property type="match status" value="1"/>
</dbReference>
<dbReference type="PIRSF" id="PIRSF002161">
    <property type="entry name" value="Ribosomal_L5"/>
    <property type="match status" value="1"/>
</dbReference>
<dbReference type="SUPFAM" id="SSF55282">
    <property type="entry name" value="RL5-like"/>
    <property type="match status" value="1"/>
</dbReference>
<dbReference type="PROSITE" id="PS00358">
    <property type="entry name" value="RIBOSOMAL_L5"/>
    <property type="match status" value="1"/>
</dbReference>
<gene>
    <name evidence="1" type="primary">rplE</name>
    <name type="ordered locus">SpyM50056</name>
</gene>
<accession>A2RC26</accession>
<sequence>MANRLKEKYTNEVIPALTEKFNYTSVMAVPKVEKIVLNMGVGDAVSNAKNLEKAAAELALISGQKPLITKAKKSIAGFRLREGVAIGAKVTLRGERMYEFLDKLVSVSLPRVRDFHGVPTKSFDGRGNYTLGVKEQLIFPEISFDDVDKVRGLDIVIVTTANTDEESRELLKGLGMPFAK</sequence>
<organism>
    <name type="scientific">Streptococcus pyogenes serotype M5 (strain Manfredo)</name>
    <dbReference type="NCBI Taxonomy" id="160491"/>
    <lineage>
        <taxon>Bacteria</taxon>
        <taxon>Bacillati</taxon>
        <taxon>Bacillota</taxon>
        <taxon>Bacilli</taxon>
        <taxon>Lactobacillales</taxon>
        <taxon>Streptococcaceae</taxon>
        <taxon>Streptococcus</taxon>
    </lineage>
</organism>
<feature type="chain" id="PRO_1000052843" description="Large ribosomal subunit protein uL5">
    <location>
        <begin position="1"/>
        <end position="180"/>
    </location>
</feature>
<name>RL5_STRPG</name>